<feature type="chain" id="PRO_1000092312" description="N-acetylmuramic acid 6-phosphate etherase">
    <location>
        <begin position="1"/>
        <end position="297"/>
    </location>
</feature>
<feature type="domain" description="SIS" evidence="1">
    <location>
        <begin position="55"/>
        <end position="218"/>
    </location>
</feature>
<feature type="active site" description="Proton donor" evidence="1">
    <location>
        <position position="83"/>
    </location>
</feature>
<feature type="active site" evidence="1">
    <location>
        <position position="114"/>
    </location>
</feature>
<reference key="1">
    <citation type="journal article" date="2011" name="J. Bacteriol.">
        <title>Comparative genomics of 28 Salmonella enterica isolates: evidence for CRISPR-mediated adaptive sublineage evolution.</title>
        <authorList>
            <person name="Fricke W.F."/>
            <person name="Mammel M.K."/>
            <person name="McDermott P.F."/>
            <person name="Tartera C."/>
            <person name="White D.G."/>
            <person name="Leclerc J.E."/>
            <person name="Ravel J."/>
            <person name="Cebula T.A."/>
        </authorList>
    </citation>
    <scope>NUCLEOTIDE SEQUENCE [LARGE SCALE GENOMIC DNA]</scope>
    <source>
        <strain>CT_02021853</strain>
    </source>
</reference>
<protein>
    <recommendedName>
        <fullName evidence="1">N-acetylmuramic acid 6-phosphate etherase</fullName>
        <shortName evidence="1">MurNAc-6-P etherase</shortName>
        <ecNumber evidence="1">4.2.1.126</ecNumber>
    </recommendedName>
    <alternativeName>
        <fullName evidence="1">N-acetylmuramic acid 6-phosphate hydrolase</fullName>
    </alternativeName>
    <alternativeName>
        <fullName evidence="1">N-acetylmuramic acid 6-phosphate lyase</fullName>
    </alternativeName>
</protein>
<proteinExistence type="inferred from homology"/>
<dbReference type="EC" id="4.2.1.126" evidence="1"/>
<dbReference type="EMBL" id="CP001144">
    <property type="protein sequence ID" value="ACH74514.1"/>
    <property type="molecule type" value="Genomic_DNA"/>
</dbReference>
<dbReference type="RefSeq" id="WP_001048537.1">
    <property type="nucleotide sequence ID" value="NC_011205.1"/>
</dbReference>
<dbReference type="SMR" id="B5FRB5"/>
<dbReference type="KEGG" id="sed:SeD_A2949"/>
<dbReference type="HOGENOM" id="CLU_049049_1_1_6"/>
<dbReference type="UniPathway" id="UPA00342"/>
<dbReference type="UniPathway" id="UPA00343"/>
<dbReference type="UniPathway" id="UPA00544"/>
<dbReference type="Proteomes" id="UP000008322">
    <property type="component" value="Chromosome"/>
</dbReference>
<dbReference type="GO" id="GO:0097367">
    <property type="term" value="F:carbohydrate derivative binding"/>
    <property type="evidence" value="ECO:0007669"/>
    <property type="project" value="InterPro"/>
</dbReference>
<dbReference type="GO" id="GO:0016835">
    <property type="term" value="F:carbon-oxygen lyase activity"/>
    <property type="evidence" value="ECO:0007669"/>
    <property type="project" value="UniProtKB-UniRule"/>
</dbReference>
<dbReference type="GO" id="GO:0016803">
    <property type="term" value="F:ether hydrolase activity"/>
    <property type="evidence" value="ECO:0007669"/>
    <property type="project" value="TreeGrafter"/>
</dbReference>
<dbReference type="GO" id="GO:0097175">
    <property type="term" value="P:1,6-anhydro-N-acetyl-beta-muramic acid catabolic process"/>
    <property type="evidence" value="ECO:0007669"/>
    <property type="project" value="UniProtKB-UniRule"/>
</dbReference>
<dbReference type="GO" id="GO:0046348">
    <property type="term" value="P:amino sugar catabolic process"/>
    <property type="evidence" value="ECO:0007669"/>
    <property type="project" value="InterPro"/>
</dbReference>
<dbReference type="GO" id="GO:0097173">
    <property type="term" value="P:N-acetylmuramic acid catabolic process"/>
    <property type="evidence" value="ECO:0007669"/>
    <property type="project" value="UniProtKB-UniPathway"/>
</dbReference>
<dbReference type="GO" id="GO:0009254">
    <property type="term" value="P:peptidoglycan turnover"/>
    <property type="evidence" value="ECO:0007669"/>
    <property type="project" value="UniProtKB-UniRule"/>
</dbReference>
<dbReference type="CDD" id="cd05007">
    <property type="entry name" value="SIS_Etherase"/>
    <property type="match status" value="1"/>
</dbReference>
<dbReference type="FunFam" id="1.10.8.1080:FF:000001">
    <property type="entry name" value="N-acetylmuramic acid 6-phosphate etherase"/>
    <property type="match status" value="1"/>
</dbReference>
<dbReference type="FunFam" id="3.40.50.10490:FF:000014">
    <property type="entry name" value="N-acetylmuramic acid 6-phosphate etherase"/>
    <property type="match status" value="1"/>
</dbReference>
<dbReference type="Gene3D" id="1.10.8.1080">
    <property type="match status" value="1"/>
</dbReference>
<dbReference type="Gene3D" id="3.40.50.10490">
    <property type="entry name" value="Glucose-6-phosphate isomerase like protein, domain 1"/>
    <property type="match status" value="1"/>
</dbReference>
<dbReference type="HAMAP" id="MF_00068">
    <property type="entry name" value="MurQ"/>
    <property type="match status" value="1"/>
</dbReference>
<dbReference type="InterPro" id="IPR005488">
    <property type="entry name" value="Etherase_MurQ"/>
</dbReference>
<dbReference type="InterPro" id="IPR005486">
    <property type="entry name" value="Glucokinase_regulatory_CS"/>
</dbReference>
<dbReference type="InterPro" id="IPR040190">
    <property type="entry name" value="MURQ/GCKR"/>
</dbReference>
<dbReference type="InterPro" id="IPR001347">
    <property type="entry name" value="SIS_dom"/>
</dbReference>
<dbReference type="InterPro" id="IPR046348">
    <property type="entry name" value="SIS_dom_sf"/>
</dbReference>
<dbReference type="NCBIfam" id="TIGR00274">
    <property type="entry name" value="N-acetylmuramic acid 6-phosphate etherase"/>
    <property type="match status" value="1"/>
</dbReference>
<dbReference type="NCBIfam" id="NF003915">
    <property type="entry name" value="PRK05441.1"/>
    <property type="match status" value="1"/>
</dbReference>
<dbReference type="NCBIfam" id="NF009222">
    <property type="entry name" value="PRK12570.1"/>
    <property type="match status" value="1"/>
</dbReference>
<dbReference type="PANTHER" id="PTHR10088">
    <property type="entry name" value="GLUCOKINASE REGULATORY PROTEIN"/>
    <property type="match status" value="1"/>
</dbReference>
<dbReference type="PANTHER" id="PTHR10088:SF5">
    <property type="entry name" value="N-ACETYLMURAMIC ACID 6-PHOSPHATE ETHERASE"/>
    <property type="match status" value="1"/>
</dbReference>
<dbReference type="Pfam" id="PF22645">
    <property type="entry name" value="GKRP_SIS_N"/>
    <property type="match status" value="1"/>
</dbReference>
<dbReference type="SUPFAM" id="SSF53697">
    <property type="entry name" value="SIS domain"/>
    <property type="match status" value="1"/>
</dbReference>
<dbReference type="PROSITE" id="PS01272">
    <property type="entry name" value="GCKR"/>
    <property type="match status" value="1"/>
</dbReference>
<dbReference type="PROSITE" id="PS51464">
    <property type="entry name" value="SIS"/>
    <property type="match status" value="1"/>
</dbReference>
<sequence length="297" mass="30976">MNLGTLVSETRNPQTMDLDALPTPELVKRFNEQDTRVAEAVKATLPDVARAVDAAVAALKSGGRIIYMGAGTSGRLGVLDASECPPTFGVPHGLVVGLIAGGPGALLKAVEGAEDSQQAGEDDLVALNLQEQDLVVGLAASGRTPYVIGGLRYARQSGCTTVAVSCNPDSPIAREANIAISPVVGPEALTGSTRLKSGTAQKMVLNMISTGAMVKFGKVYQNLMVDMKATNVKLVDRACRMVVEATGIGREEAETLLKQTDFEVKPAILMALTGLDAAAAREKLAAHQGFLRAALEH</sequence>
<evidence type="ECO:0000255" key="1">
    <source>
        <dbReference type="HAMAP-Rule" id="MF_00068"/>
    </source>
</evidence>
<accession>B5FRB5</accession>
<name>MURQ_SALDC</name>
<gene>
    <name evidence="1" type="primary">murQ</name>
    <name type="ordered locus">SeD_A2949</name>
</gene>
<organism>
    <name type="scientific">Salmonella dublin (strain CT_02021853)</name>
    <dbReference type="NCBI Taxonomy" id="439851"/>
    <lineage>
        <taxon>Bacteria</taxon>
        <taxon>Pseudomonadati</taxon>
        <taxon>Pseudomonadota</taxon>
        <taxon>Gammaproteobacteria</taxon>
        <taxon>Enterobacterales</taxon>
        <taxon>Enterobacteriaceae</taxon>
        <taxon>Salmonella</taxon>
    </lineage>
</organism>
<keyword id="KW-0119">Carbohydrate metabolism</keyword>
<keyword id="KW-0456">Lyase</keyword>
<comment type="function">
    <text evidence="1">Specifically catalyzes the cleavage of the D-lactyl ether substituent of MurNAc 6-phosphate, producing GlcNAc 6-phosphate and D-lactate. Together with AnmK, is also required for the utilization of anhydro-N-acetylmuramic acid (anhMurNAc) either imported from the medium or derived from its own cell wall murein, and thus plays a role in cell wall recycling.</text>
</comment>
<comment type="catalytic activity">
    <reaction evidence="1">
        <text>N-acetyl-D-muramate 6-phosphate + H2O = N-acetyl-D-glucosamine 6-phosphate + (R)-lactate</text>
        <dbReference type="Rhea" id="RHEA:26410"/>
        <dbReference type="ChEBI" id="CHEBI:15377"/>
        <dbReference type="ChEBI" id="CHEBI:16004"/>
        <dbReference type="ChEBI" id="CHEBI:57513"/>
        <dbReference type="ChEBI" id="CHEBI:58722"/>
        <dbReference type="EC" id="4.2.1.126"/>
    </reaction>
</comment>
<comment type="pathway">
    <text evidence="1">Amino-sugar metabolism; 1,6-anhydro-N-acetylmuramate degradation.</text>
</comment>
<comment type="pathway">
    <text evidence="1">Amino-sugar metabolism; N-acetylmuramate degradation.</text>
</comment>
<comment type="pathway">
    <text evidence="1">Cell wall biogenesis; peptidoglycan recycling.</text>
</comment>
<comment type="subunit">
    <text evidence="1">Homodimer.</text>
</comment>
<comment type="induction">
    <text evidence="1">Induced by MurNAc 6-phosphate that releases the repressor MurR from the DNA. Repressed by MurR in the absence of MurNAc 6-phosphate.</text>
</comment>
<comment type="miscellaneous">
    <text evidence="1">A lyase-type mechanism (elimination/hydration) is suggested for the cleavage of the lactyl ether bond of MurNAc 6-phosphate, with the formation of an alpha,beta-unsaturated aldehyde intermediate with (E)-stereochemistry, followed by the syn addition of water to give product.</text>
</comment>
<comment type="similarity">
    <text evidence="1">Belongs to the GCKR-like family. MurNAc-6-P etherase subfamily.</text>
</comment>